<comment type="function">
    <text evidence="1">Involved in the biosynthesis of the hopanoid precursor squalene (SQ) from farnesyl diphosphate (FPP). Catalyzes the second step, the conversion of presqualene diphosphate (PSPP) to hydroxysqualene (HSQ).</text>
</comment>
<comment type="catalytic activity">
    <reaction evidence="1">
        <text>presqualene diphosphate + H2O = hydroxysqualene + diphosphate</text>
        <dbReference type="Rhea" id="RHEA:47984"/>
        <dbReference type="ChEBI" id="CHEBI:15377"/>
        <dbReference type="ChEBI" id="CHEBI:33019"/>
        <dbReference type="ChEBI" id="CHEBI:57310"/>
        <dbReference type="ChEBI" id="CHEBI:88123"/>
        <dbReference type="EC" id="4.2.3.156"/>
    </reaction>
</comment>
<comment type="pathway">
    <text evidence="1 2">Secondary metabolite biosynthesis; hopanoid biosynthesis.</text>
</comment>
<comment type="similarity">
    <text evidence="5">Belongs to the phytoene/squalene synthase family. HpnC subfamily.</text>
</comment>
<organism>
    <name type="scientific">Zymomonas mobilis subsp. mobilis (strain ATCC 31821 / ZM4 / CP4)</name>
    <dbReference type="NCBI Taxonomy" id="264203"/>
    <lineage>
        <taxon>Bacteria</taxon>
        <taxon>Pseudomonadati</taxon>
        <taxon>Pseudomonadota</taxon>
        <taxon>Alphaproteobacteria</taxon>
        <taxon>Sphingomonadales</taxon>
        <taxon>Zymomonadaceae</taxon>
        <taxon>Zymomonas</taxon>
    </lineage>
</organism>
<keyword id="KW-0456">Lyase</keyword>
<keyword id="KW-1185">Reference proteome</keyword>
<proteinExistence type="evidence at protein level"/>
<evidence type="ECO:0000269" key="1">
    <source>
    </source>
</evidence>
<evidence type="ECO:0000269" key="2">
    <source>
    </source>
</evidence>
<evidence type="ECO:0000303" key="3">
    <source>
    </source>
</evidence>
<evidence type="ECO:0000303" key="4">
    <source>
    </source>
</evidence>
<evidence type="ECO:0000305" key="5"/>
<evidence type="ECO:0000312" key="6">
    <source>
        <dbReference type="EMBL" id="AAV89493.1"/>
    </source>
</evidence>
<name>HPNC_ZYMMO</name>
<accession>Q5NP67</accession>
<accession>O34287</accession>
<gene>
    <name evidence="4" type="primary">hpnC</name>
    <name evidence="6" type="ordered locus">ZMO0869</name>
</gene>
<protein>
    <recommendedName>
        <fullName evidence="3">Hydroxysqualene synthase</fullName>
        <shortName evidence="3">HSQ synthase</shortName>
        <shortName evidence="3">HSQase</shortName>
        <ecNumber evidence="1">4.2.3.156</ecNumber>
    </recommendedName>
</protein>
<feature type="chain" id="PRO_0000441692" description="Hydroxysqualene synthase">
    <location>
        <begin position="1"/>
        <end position="297"/>
    </location>
</feature>
<feature type="sequence conflict" description="In Ref. 1; CAA04732 and 2; AAF12832." evidence="5" ref="1 2">
    <original>MEGACASTY</original>
    <variation>MWKGRAQARN</variation>
    <location>
        <begin position="1"/>
        <end position="9"/>
    </location>
</feature>
<feature type="sequence conflict" description="In Ref. 1; CAA04732 and 2; AAF12832." evidence="5" ref="1 2">
    <original>T</original>
    <variation>N</variation>
    <location>
        <position position="105"/>
    </location>
</feature>
<feature type="sequence conflict" description="In Ref. 1; CAA04732 and 2; AAF12832." evidence="5" ref="1 2">
    <original>R</original>
    <variation>C</variation>
    <location>
        <position position="211"/>
    </location>
</feature>
<feature type="sequence conflict" description="In Ref. 1; CAA04732 and 2; AAF12832." evidence="5" ref="1 2">
    <original>GFSA</original>
    <variation>SFSV</variation>
    <location>
        <begin position="238"/>
        <end position="241"/>
    </location>
</feature>
<reference key="1">
    <citation type="journal article" date="1998" name="Biochim. Biophys. Acta">
        <title>Cloning of conserved genes from Zymomonas mobilis and Bradyrhizobium japonicum that function in the biosynthesis of hopanoid lipids.</title>
        <authorList>
            <person name="Perzl M."/>
            <person name="Reipen I.G."/>
            <person name="Schmitz S."/>
            <person name="Poralla K."/>
            <person name="Sahm H."/>
            <person name="Sprenger G.A."/>
            <person name="Kannenberg E.L."/>
        </authorList>
    </citation>
    <scope>NUCLEOTIDE SEQUENCE [GENOMIC DNA]</scope>
    <scope>PATHWAY</scope>
    <source>
        <strain>ATCC 31821 / ZM4 / CP4</strain>
    </source>
</reference>
<reference key="2">
    <citation type="submission" date="1999-11" db="EMBL/GenBank/DDBJ databases">
        <title>Sequence analysis of 43F4 fosmid clone of Zymomonas mobilis.</title>
        <authorList>
            <person name="Um H.W."/>
        </authorList>
    </citation>
    <scope>NUCLEOTIDE SEQUENCE [GENOMIC DNA]</scope>
    <source>
        <strain>ATCC 31821 / ZM4 / CP4</strain>
    </source>
</reference>
<reference key="3">
    <citation type="journal article" date="2005" name="Nat. Biotechnol.">
        <title>The genome sequence of the ethanologenic bacterium Zymomonas mobilis ZM4.</title>
        <authorList>
            <person name="Seo J.-S."/>
            <person name="Chong H."/>
            <person name="Park H.S."/>
            <person name="Yoon K.-O."/>
            <person name="Jung C."/>
            <person name="Kim J.J."/>
            <person name="Hong J.H."/>
            <person name="Kim H."/>
            <person name="Kim J.-H."/>
            <person name="Kil J.-I."/>
            <person name="Park C.J."/>
            <person name="Oh H.-M."/>
            <person name="Lee J.-S."/>
            <person name="Jin S.-J."/>
            <person name="Um H.-W."/>
            <person name="Lee H.-J."/>
            <person name="Oh S.-J."/>
            <person name="Kim J.Y."/>
            <person name="Kang H.L."/>
            <person name="Lee S.Y."/>
            <person name="Lee K.J."/>
            <person name="Kang H.S."/>
        </authorList>
    </citation>
    <scope>NUCLEOTIDE SEQUENCE [LARGE SCALE GENOMIC DNA]</scope>
    <source>
        <strain>ATCC 31821 / ZM4 / CP4</strain>
    </source>
</reference>
<reference key="4">
    <citation type="journal article" date="2015" name="ACS Cent. Sci.">
        <title>Biosynthesis of squalene from farnesyl diphosphate in bacteria: three steps catalyzed by three enzymes.</title>
        <authorList>
            <person name="Pan J.J."/>
            <person name="Solbiati J.O."/>
            <person name="Ramamoorthy G."/>
            <person name="Hillerich B.S."/>
            <person name="Seidel R.D."/>
            <person name="Cronan J.E."/>
            <person name="Almo S.C."/>
            <person name="Poulter C.D."/>
        </authorList>
    </citation>
    <scope>FUNCTION</scope>
    <scope>CATALYTIC ACTIVITY</scope>
    <scope>PATHWAY</scope>
    <source>
        <strain>ATCC 31821 / ZM4 / CP4</strain>
    </source>
</reference>
<dbReference type="EC" id="4.2.3.156" evidence="1"/>
<dbReference type="EMBL" id="AJ001401">
    <property type="protein sequence ID" value="CAA04732.1"/>
    <property type="molecule type" value="Genomic_DNA"/>
</dbReference>
<dbReference type="EMBL" id="AF203881">
    <property type="protein sequence ID" value="AAF12832.1"/>
    <property type="molecule type" value="Genomic_DNA"/>
</dbReference>
<dbReference type="EMBL" id="AE008692">
    <property type="protein sequence ID" value="AAV89493.1"/>
    <property type="molecule type" value="Genomic_DNA"/>
</dbReference>
<dbReference type="SMR" id="Q5NP67"/>
<dbReference type="STRING" id="264203.ZMO0869"/>
<dbReference type="KEGG" id="zmo:ZMO0869"/>
<dbReference type="eggNOG" id="COG1562">
    <property type="taxonomic scope" value="Bacteria"/>
</dbReference>
<dbReference type="HOGENOM" id="CLU_037269_0_1_5"/>
<dbReference type="BRENDA" id="4.2.3.156">
    <property type="organism ID" value="6765"/>
</dbReference>
<dbReference type="UniPathway" id="UPA00337"/>
<dbReference type="Proteomes" id="UP000001173">
    <property type="component" value="Chromosome"/>
</dbReference>
<dbReference type="GO" id="GO:0004311">
    <property type="term" value="F:geranylgeranyl diphosphate synthase activity"/>
    <property type="evidence" value="ECO:0007669"/>
    <property type="project" value="InterPro"/>
</dbReference>
<dbReference type="GO" id="GO:0016829">
    <property type="term" value="F:lyase activity"/>
    <property type="evidence" value="ECO:0007669"/>
    <property type="project" value="UniProtKB-KW"/>
</dbReference>
<dbReference type="GO" id="GO:0051996">
    <property type="term" value="F:squalene synthase [NAD(P)H] activity"/>
    <property type="evidence" value="ECO:0007669"/>
    <property type="project" value="InterPro"/>
</dbReference>
<dbReference type="GO" id="GO:0016114">
    <property type="term" value="P:terpenoid biosynthetic process"/>
    <property type="evidence" value="ECO:0007669"/>
    <property type="project" value="UniProtKB-ARBA"/>
</dbReference>
<dbReference type="CDD" id="cd00683">
    <property type="entry name" value="Trans_IPPS_HH"/>
    <property type="match status" value="1"/>
</dbReference>
<dbReference type="Gene3D" id="1.10.600.10">
    <property type="entry name" value="Farnesyl Diphosphate Synthase"/>
    <property type="match status" value="1"/>
</dbReference>
<dbReference type="InterPro" id="IPR017827">
    <property type="entry name" value="HSQ_synthase_HpnC"/>
</dbReference>
<dbReference type="InterPro" id="IPR008949">
    <property type="entry name" value="Isoprenoid_synthase_dom_sf"/>
</dbReference>
<dbReference type="InterPro" id="IPR002060">
    <property type="entry name" value="Squ/phyt_synthse"/>
</dbReference>
<dbReference type="InterPro" id="IPR033904">
    <property type="entry name" value="Trans_IPPS_HH"/>
</dbReference>
<dbReference type="NCBIfam" id="TIGR03464">
    <property type="entry name" value="HpnC"/>
    <property type="match status" value="1"/>
</dbReference>
<dbReference type="PANTHER" id="PTHR31480">
    <property type="entry name" value="BIFUNCTIONAL LYCOPENE CYCLASE/PHYTOENE SYNTHASE"/>
    <property type="match status" value="1"/>
</dbReference>
<dbReference type="Pfam" id="PF00494">
    <property type="entry name" value="SQS_PSY"/>
    <property type="match status" value="1"/>
</dbReference>
<dbReference type="SFLD" id="SFLDS00005">
    <property type="entry name" value="Isoprenoid_Synthase_Type_I"/>
    <property type="match status" value="1"/>
</dbReference>
<dbReference type="SFLD" id="SFLDG01018">
    <property type="entry name" value="Squalene/Phytoene_Synthase_Lik"/>
    <property type="match status" value="1"/>
</dbReference>
<dbReference type="SUPFAM" id="SSF48576">
    <property type="entry name" value="Terpenoid synthases"/>
    <property type="match status" value="1"/>
</dbReference>
<sequence>MEGACASTYRSVSIKTKNKLNAAALVSGKGHQDENFPVASFLINPEYRPIIMAFYQFARQADDVADNVIASKKDRLAILEDMRSSLTGESQSEPNAVVLRQTLITHGLDHTIVHGLDLLEAFRRDVSVNRYENWDALMDYCRYSASPVGRFVLDVHKESRNLWPMNDALCTALQVINHLQDCGKDYRMMNRIYIPSDIMEAVGATAGDLGRFHASLPLRQAIETAALKTKSLLKRSSGFSAAIHDKRLGVEVAVIQRLAESLTECLTKHDPLSERVHHNKAETLGLAFVAAAGRLFS</sequence>